<gene>
    <name evidence="1" type="primary">argF</name>
    <name type="ordered locus">VV1_1466</name>
</gene>
<evidence type="ECO:0000255" key="1">
    <source>
        <dbReference type="HAMAP-Rule" id="MF_01109"/>
    </source>
</evidence>
<evidence type="ECO:0000269" key="2">
    <source ref="3"/>
</evidence>
<evidence type="ECO:0000269" key="3">
    <source ref="4"/>
</evidence>
<evidence type="ECO:0000305" key="4">
    <source ref="3"/>
</evidence>
<evidence type="ECO:0000305" key="5">
    <source ref="4"/>
</evidence>
<evidence type="ECO:0007744" key="6">
    <source>
        <dbReference type="PDB" id="4H31"/>
    </source>
</evidence>
<evidence type="ECO:0007744" key="7">
    <source>
        <dbReference type="PDB" id="4JFR"/>
    </source>
</evidence>
<evidence type="ECO:0007744" key="8">
    <source>
        <dbReference type="PDB" id="4JHX"/>
    </source>
</evidence>
<evidence type="ECO:0007744" key="9">
    <source>
        <dbReference type="PDB" id="4JQO"/>
    </source>
</evidence>
<evidence type="ECO:0007829" key="10">
    <source>
        <dbReference type="PDB" id="3UPD"/>
    </source>
</evidence>
<evidence type="ECO:0007829" key="11">
    <source>
        <dbReference type="PDB" id="4H31"/>
    </source>
</evidence>
<feature type="chain" id="PRO_0000113056" description="Ornithine carbamoyltransferase">
    <location>
        <begin position="1"/>
        <end position="334"/>
    </location>
</feature>
<feature type="binding site" evidence="2 3 6 7 8 9">
    <location>
        <begin position="57"/>
        <end position="60"/>
    </location>
    <ligand>
        <name>carbamoyl phosphate</name>
        <dbReference type="ChEBI" id="CHEBI:58228"/>
    </ligand>
</feature>
<feature type="binding site" evidence="2 3 6 9">
    <location>
        <position position="84"/>
    </location>
    <ligand>
        <name>carbamoyl phosphate</name>
        <dbReference type="ChEBI" id="CHEBI:58228"/>
    </ligand>
</feature>
<feature type="binding site" evidence="2 3 6 7 8 9">
    <location>
        <position position="108"/>
    </location>
    <ligand>
        <name>carbamoyl phosphate</name>
        <dbReference type="ChEBI" id="CHEBI:58228"/>
    </ligand>
</feature>
<feature type="binding site" evidence="2 3 6 7 8 9">
    <location>
        <begin position="135"/>
        <end position="138"/>
    </location>
    <ligand>
        <name>carbamoyl phosphate</name>
        <dbReference type="ChEBI" id="CHEBI:58228"/>
    </ligand>
</feature>
<feature type="binding site" evidence="2 3 6 8 9">
    <location>
        <position position="169"/>
    </location>
    <ligand>
        <name>L-ornithine</name>
        <dbReference type="ChEBI" id="CHEBI:46911"/>
    </ligand>
</feature>
<feature type="binding site" evidence="2 3 6 8 9">
    <location>
        <position position="233"/>
    </location>
    <ligand>
        <name>L-ornithine</name>
        <dbReference type="ChEBI" id="CHEBI:46911"/>
    </ligand>
</feature>
<feature type="binding site" evidence="2 3 6 8 9">
    <location>
        <begin position="237"/>
        <end position="238"/>
    </location>
    <ligand>
        <name>L-ornithine</name>
        <dbReference type="ChEBI" id="CHEBI:46911"/>
    </ligand>
</feature>
<feature type="binding site" evidence="2 3 6 7 8 9">
    <location>
        <begin position="275"/>
        <end position="276"/>
    </location>
    <ligand>
        <name>carbamoyl phosphate</name>
        <dbReference type="ChEBI" id="CHEBI:58228"/>
    </ligand>
</feature>
<feature type="binding site" evidence="2 3 6 8 9">
    <location>
        <position position="320"/>
    </location>
    <ligand>
        <name>carbamoyl phosphate</name>
        <dbReference type="ChEBI" id="CHEBI:58228"/>
    </ligand>
</feature>
<feature type="helix" evidence="11">
    <location>
        <begin position="1"/>
        <end position="5"/>
    </location>
</feature>
<feature type="helix" evidence="11">
    <location>
        <begin position="13"/>
        <end position="15"/>
    </location>
</feature>
<feature type="helix" evidence="11">
    <location>
        <begin position="18"/>
        <end position="37"/>
    </location>
</feature>
<feature type="turn" evidence="11">
    <location>
        <begin position="43"/>
        <end position="46"/>
    </location>
</feature>
<feature type="strand" evidence="11">
    <location>
        <begin position="48"/>
        <end position="55"/>
    </location>
</feature>
<feature type="helix" evidence="11">
    <location>
        <begin position="59"/>
        <end position="70"/>
    </location>
</feature>
<feature type="strand" evidence="11">
    <location>
        <begin position="74"/>
        <end position="78"/>
    </location>
</feature>
<feature type="strand" evidence="11">
    <location>
        <begin position="80"/>
        <end position="83"/>
    </location>
</feature>
<feature type="turn" evidence="11">
    <location>
        <begin position="86"/>
        <end position="88"/>
    </location>
</feature>
<feature type="helix" evidence="11">
    <location>
        <begin position="91"/>
        <end position="101"/>
    </location>
</feature>
<feature type="strand" evidence="11">
    <location>
        <begin position="103"/>
        <end position="108"/>
    </location>
</feature>
<feature type="helix" evidence="11">
    <location>
        <begin position="112"/>
        <end position="121"/>
    </location>
</feature>
<feature type="strand" evidence="11">
    <location>
        <begin position="122"/>
        <end position="124"/>
    </location>
</feature>
<feature type="strand" evidence="11">
    <location>
        <begin position="126"/>
        <end position="129"/>
    </location>
</feature>
<feature type="helix" evidence="11">
    <location>
        <begin position="136"/>
        <end position="148"/>
    </location>
</feature>
<feature type="turn" evidence="11">
    <location>
        <begin position="149"/>
        <end position="152"/>
    </location>
</feature>
<feature type="helix" evidence="11">
    <location>
        <begin position="155"/>
        <end position="157"/>
    </location>
</feature>
<feature type="strand" evidence="11">
    <location>
        <begin position="159"/>
        <end position="164"/>
    </location>
</feature>
<feature type="helix" evidence="11">
    <location>
        <begin position="169"/>
        <end position="181"/>
    </location>
</feature>
<feature type="strand" evidence="11">
    <location>
        <begin position="184"/>
        <end position="189"/>
    </location>
</feature>
<feature type="helix" evidence="11">
    <location>
        <begin position="191"/>
        <end position="193"/>
    </location>
</feature>
<feature type="helix" evidence="11">
    <location>
        <begin position="197"/>
        <end position="210"/>
    </location>
</feature>
<feature type="strand" evidence="11">
    <location>
        <begin position="213"/>
        <end position="218"/>
    </location>
</feature>
<feature type="helix" evidence="11">
    <location>
        <begin position="220"/>
        <end position="224"/>
    </location>
</feature>
<feature type="strand" evidence="11">
    <location>
        <begin position="228"/>
        <end position="232"/>
    </location>
</feature>
<feature type="strand" evidence="10">
    <location>
        <begin position="238"/>
        <end position="240"/>
    </location>
</feature>
<feature type="helix" evidence="11">
    <location>
        <begin position="244"/>
        <end position="252"/>
    </location>
</feature>
<feature type="helix" evidence="11">
    <location>
        <begin position="253"/>
        <end position="255"/>
    </location>
</feature>
<feature type="helix" evidence="11">
    <location>
        <begin position="259"/>
        <end position="264"/>
    </location>
</feature>
<feature type="strand" evidence="11">
    <location>
        <begin position="271"/>
        <end position="274"/>
    </location>
</feature>
<feature type="strand" evidence="11">
    <location>
        <begin position="281"/>
        <end position="284"/>
    </location>
</feature>
<feature type="helix" evidence="11">
    <location>
        <begin position="285"/>
        <end position="293"/>
    </location>
</feature>
<feature type="strand" evidence="11">
    <location>
        <begin position="299"/>
        <end position="301"/>
    </location>
</feature>
<feature type="helix" evidence="11">
    <location>
        <begin position="303"/>
        <end position="306"/>
    </location>
</feature>
<feature type="helix" evidence="11">
    <location>
        <begin position="313"/>
        <end position="332"/>
    </location>
</feature>
<accession>Q8DCF5</accession>
<name>OTC_VIBVU</name>
<organism>
    <name type="scientific">Vibrio vulnificus (strain CMCP6)</name>
    <dbReference type="NCBI Taxonomy" id="216895"/>
    <lineage>
        <taxon>Bacteria</taxon>
        <taxon>Pseudomonadati</taxon>
        <taxon>Pseudomonadota</taxon>
        <taxon>Gammaproteobacteria</taxon>
        <taxon>Vibrionales</taxon>
        <taxon>Vibrionaceae</taxon>
        <taxon>Vibrio</taxon>
    </lineage>
</organism>
<comment type="function">
    <text evidence="1">Reversibly catalyzes the transfer of the carbamoyl group from carbamoyl phosphate (CP) to the N(epsilon) atom of ornithine (ORN) to produce L-citrulline.</text>
</comment>
<comment type="catalytic activity">
    <reaction evidence="1">
        <text>carbamoyl phosphate + L-ornithine = L-citrulline + phosphate + H(+)</text>
        <dbReference type="Rhea" id="RHEA:19513"/>
        <dbReference type="ChEBI" id="CHEBI:15378"/>
        <dbReference type="ChEBI" id="CHEBI:43474"/>
        <dbReference type="ChEBI" id="CHEBI:46911"/>
        <dbReference type="ChEBI" id="CHEBI:57743"/>
        <dbReference type="ChEBI" id="CHEBI:58228"/>
        <dbReference type="EC" id="2.1.3.3"/>
    </reaction>
</comment>
<comment type="pathway">
    <text evidence="1">Amino-acid biosynthesis; L-arginine biosynthesis; L-arginine from L-ornithine and carbamoyl phosphate: step 1/3.</text>
</comment>
<comment type="subunit">
    <text evidence="4 5">Homotrimer.</text>
</comment>
<comment type="subcellular location">
    <subcellularLocation>
        <location evidence="1">Cytoplasm</location>
    </subcellularLocation>
</comment>
<comment type="similarity">
    <text evidence="1">Belongs to the aspartate/ornithine carbamoyltransferase superfamily. OTCase family.</text>
</comment>
<reference key="1">
    <citation type="submission" date="2002-12" db="EMBL/GenBank/DDBJ databases">
        <title>Complete genome sequence of Vibrio vulnificus CMCP6.</title>
        <authorList>
            <person name="Rhee J.H."/>
            <person name="Kim S.Y."/>
            <person name="Chung S.S."/>
            <person name="Kim J.J."/>
            <person name="Moon Y.H."/>
            <person name="Jeong H."/>
            <person name="Choy H.E."/>
        </authorList>
    </citation>
    <scope>NUCLEOTIDE SEQUENCE [LARGE SCALE GENOMIC DNA]</scope>
    <source>
        <strain>CMCP6</strain>
    </source>
</reference>
<reference key="2">
    <citation type="submission" date="2011-11" db="PDB data bank">
        <title>2.9 angstrom crystal structure of ornithine carbamoyltransferase (argF) from Vibrio vulnificus.</title>
        <authorList>
            <consortium name="Center for structural genomics of infectious diseases (CSGID)"/>
            <person name="Papazisi L."/>
            <person name="Anderson W.F."/>
        </authorList>
    </citation>
    <scope>X-RAY CRYSTALLOGRAPHY (2.91 ANGSTROMS)</scope>
</reference>
<reference key="3">
    <citation type="submission" date="2012-09" db="PDB data bank">
        <title>Structural studies of ornithine carbamoyltransferase from various pathogens.</title>
        <authorList>
            <person name="Shabalin I.G."/>
            <person name="Winsor J."/>
            <person name="Grimshaw S."/>
            <person name="Osinski T."/>
            <person name="Chordia M.D."/>
            <person name="Anderson W.F."/>
            <person name="Minor W."/>
        </authorList>
    </citation>
    <scope>X-RAY CRYSTALLOGRAPHY (1.70 ANGSTROMS) IN COMPLEX WITH CARBAMOYL PHOSPHATE AND SUBSTRATE ANALOGS</scope>
    <scope>SUBUNIT</scope>
</reference>
<reference key="4">
    <citation type="submission" date="2013-02" db="PDB data bank">
        <title>Crystal structures and kinetic properties of anabolic ornithine carbamoyltransferase from human pathogens Vibrio vulnificus and Bacillus anthracis.</title>
        <authorList>
            <person name="Shabalin I.G."/>
            <person name="Winsor J."/>
            <person name="Grimshaw S."/>
            <person name="Minor W."/>
        </authorList>
    </citation>
    <scope>X-RAY CRYSTALLOGRAPHY (1.85 ANGSTROMS) IN COMPLEX WITH CARBAMOYL PHOSPHATE AND SUBSTRATE ANALOGS</scope>
    <scope>SUBUNIT</scope>
</reference>
<protein>
    <recommendedName>
        <fullName evidence="1">Ornithine carbamoyltransferase</fullName>
        <shortName evidence="1">OTCase</shortName>
        <ecNumber evidence="1">2.1.3.3</ecNumber>
    </recommendedName>
</protein>
<dbReference type="EC" id="2.1.3.3" evidence="1"/>
<dbReference type="EMBL" id="AE016795">
    <property type="protein sequence ID" value="AAO09905.1"/>
    <property type="molecule type" value="Genomic_DNA"/>
</dbReference>
<dbReference type="RefSeq" id="WP_011079423.1">
    <property type="nucleotide sequence ID" value="NC_004459.3"/>
</dbReference>
<dbReference type="PDB" id="3UPD">
    <property type="method" value="X-ray"/>
    <property type="resolution" value="2.91 A"/>
    <property type="chains" value="A=1-334"/>
</dbReference>
<dbReference type="PDB" id="4H31">
    <property type="method" value="X-ray"/>
    <property type="resolution" value="1.70 A"/>
    <property type="chains" value="A/B/C=1-334"/>
</dbReference>
<dbReference type="PDB" id="4JFR">
    <property type="method" value="X-ray"/>
    <property type="resolution" value="2.17 A"/>
    <property type="chains" value="A/B/C=1-334"/>
</dbReference>
<dbReference type="PDB" id="4JHX">
    <property type="method" value="X-ray"/>
    <property type="resolution" value="1.85 A"/>
    <property type="chains" value="A/B/C=1-334"/>
</dbReference>
<dbReference type="PDB" id="4JQO">
    <property type="method" value="X-ray"/>
    <property type="resolution" value="2.08 A"/>
    <property type="chains" value="A/B/C=1-334"/>
</dbReference>
<dbReference type="PDB" id="4KWT">
    <property type="method" value="X-ray"/>
    <property type="resolution" value="1.86 A"/>
    <property type="chains" value="A/B/C=1-334"/>
</dbReference>
<dbReference type="PDBsum" id="3UPD"/>
<dbReference type="PDBsum" id="4H31"/>
<dbReference type="PDBsum" id="4JFR"/>
<dbReference type="PDBsum" id="4JHX"/>
<dbReference type="PDBsum" id="4JQO"/>
<dbReference type="PDBsum" id="4KWT"/>
<dbReference type="SMR" id="Q8DCF5"/>
<dbReference type="KEGG" id="vvu:VV1_1466"/>
<dbReference type="HOGENOM" id="CLU_043846_3_1_6"/>
<dbReference type="UniPathway" id="UPA00068">
    <property type="reaction ID" value="UER00112"/>
</dbReference>
<dbReference type="EvolutionaryTrace" id="Q8DCF5"/>
<dbReference type="Proteomes" id="UP000002275">
    <property type="component" value="Chromosome 1"/>
</dbReference>
<dbReference type="GO" id="GO:0005737">
    <property type="term" value="C:cytoplasm"/>
    <property type="evidence" value="ECO:0007669"/>
    <property type="project" value="UniProtKB-SubCell"/>
</dbReference>
<dbReference type="GO" id="GO:0016597">
    <property type="term" value="F:amino acid binding"/>
    <property type="evidence" value="ECO:0007669"/>
    <property type="project" value="InterPro"/>
</dbReference>
<dbReference type="GO" id="GO:0004585">
    <property type="term" value="F:ornithine carbamoyltransferase activity"/>
    <property type="evidence" value="ECO:0007669"/>
    <property type="project" value="UniProtKB-UniRule"/>
</dbReference>
<dbReference type="GO" id="GO:0042450">
    <property type="term" value="P:arginine biosynthetic process via ornithine"/>
    <property type="evidence" value="ECO:0007669"/>
    <property type="project" value="TreeGrafter"/>
</dbReference>
<dbReference type="GO" id="GO:0019240">
    <property type="term" value="P:citrulline biosynthetic process"/>
    <property type="evidence" value="ECO:0007669"/>
    <property type="project" value="TreeGrafter"/>
</dbReference>
<dbReference type="GO" id="GO:0006526">
    <property type="term" value="P:L-arginine biosynthetic process"/>
    <property type="evidence" value="ECO:0007669"/>
    <property type="project" value="UniProtKB-UniRule"/>
</dbReference>
<dbReference type="FunFam" id="3.40.50.1370:FF:000003">
    <property type="entry name" value="Ornithine carbamoyltransferase"/>
    <property type="match status" value="1"/>
</dbReference>
<dbReference type="FunFam" id="3.40.50.1370:FF:000004">
    <property type="entry name" value="Ornithine carbamoyltransferase"/>
    <property type="match status" value="1"/>
</dbReference>
<dbReference type="Gene3D" id="3.40.50.1370">
    <property type="entry name" value="Aspartate/ornithine carbamoyltransferase"/>
    <property type="match status" value="2"/>
</dbReference>
<dbReference type="HAMAP" id="MF_01109">
    <property type="entry name" value="OTCase"/>
    <property type="match status" value="1"/>
</dbReference>
<dbReference type="InterPro" id="IPR006132">
    <property type="entry name" value="Asp/Orn_carbamoyltranf_P-bd"/>
</dbReference>
<dbReference type="InterPro" id="IPR006130">
    <property type="entry name" value="Asp/Orn_carbamoylTrfase"/>
</dbReference>
<dbReference type="InterPro" id="IPR036901">
    <property type="entry name" value="Asp/Orn_carbamoylTrfase_sf"/>
</dbReference>
<dbReference type="InterPro" id="IPR006131">
    <property type="entry name" value="Asp_carbamoyltransf_Asp/Orn-bd"/>
</dbReference>
<dbReference type="InterPro" id="IPR002292">
    <property type="entry name" value="Orn/put_carbamltrans"/>
</dbReference>
<dbReference type="InterPro" id="IPR024904">
    <property type="entry name" value="OTCase_ArgI"/>
</dbReference>
<dbReference type="NCBIfam" id="TIGR00658">
    <property type="entry name" value="orni_carb_tr"/>
    <property type="match status" value="1"/>
</dbReference>
<dbReference type="NCBIfam" id="NF003286">
    <property type="entry name" value="PRK04284.1"/>
    <property type="match status" value="1"/>
</dbReference>
<dbReference type="PANTHER" id="PTHR45753:SF2">
    <property type="entry name" value="ORNITHINE CARBAMOYLTRANSFERASE"/>
    <property type="match status" value="1"/>
</dbReference>
<dbReference type="PANTHER" id="PTHR45753">
    <property type="entry name" value="ORNITHINE CARBAMOYLTRANSFERASE, MITOCHONDRIAL"/>
    <property type="match status" value="1"/>
</dbReference>
<dbReference type="Pfam" id="PF00185">
    <property type="entry name" value="OTCace"/>
    <property type="match status" value="1"/>
</dbReference>
<dbReference type="Pfam" id="PF02729">
    <property type="entry name" value="OTCace_N"/>
    <property type="match status" value="1"/>
</dbReference>
<dbReference type="PRINTS" id="PR00100">
    <property type="entry name" value="AOTCASE"/>
</dbReference>
<dbReference type="PRINTS" id="PR00102">
    <property type="entry name" value="OTCASE"/>
</dbReference>
<dbReference type="SUPFAM" id="SSF53671">
    <property type="entry name" value="Aspartate/ornithine carbamoyltransferase"/>
    <property type="match status" value="1"/>
</dbReference>
<dbReference type="PROSITE" id="PS00097">
    <property type="entry name" value="CARBAMOYLTRANSFERASE"/>
    <property type="match status" value="1"/>
</dbReference>
<keyword id="KW-0002">3D-structure</keyword>
<keyword id="KW-0028">Amino-acid biosynthesis</keyword>
<keyword id="KW-0055">Arginine biosynthesis</keyword>
<keyword id="KW-0963">Cytoplasm</keyword>
<keyword id="KW-0808">Transferase</keyword>
<sequence length="334" mass="36859">MAFNLRNRNFLKLLDFSTKEIQFLIDLSADLKKAKYAGTEQKKLLGKNIALIFEKASTRTRCAFEVAAFDQGAQVTYIGPSGSQIGDKESMKDTARVLGRMYDGIQYRGFGQAIVEELGAFAGVPVWNGLTDEFHPTQILADFLTMLEHSQGKALADIQFAYLGDARNNVGNSLMVGAAKMGMDIRLVGPQAYWPDEELVAACQAIAKQTGGKITLTENVAEGVQGCDFLYTDVWVSMGESPEAWDERVALMKPYQVNMNVLKQTGNPNVKFMHCLPAFHNDETTIGKQVADKFGMKGLEVTEEVFESEHSIVFDEAENRMHTIKAVMVATLGS</sequence>
<proteinExistence type="evidence at protein level"/>